<dbReference type="EC" id="2.7.11.1"/>
<dbReference type="EMBL" id="AAFI02000037">
    <property type="protein sequence ID" value="EAL67123.1"/>
    <property type="molecule type" value="Genomic_DNA"/>
</dbReference>
<dbReference type="RefSeq" id="XP_641096.1">
    <property type="nucleotide sequence ID" value="XM_636004.1"/>
</dbReference>
<dbReference type="SMR" id="Q54V35"/>
<dbReference type="STRING" id="44689.Q54V35"/>
<dbReference type="PaxDb" id="44689-DDB0229841"/>
<dbReference type="EnsemblProtists" id="EAL67123">
    <property type="protein sequence ID" value="EAL67123"/>
    <property type="gene ID" value="DDB_G0280643"/>
</dbReference>
<dbReference type="GeneID" id="8622655"/>
<dbReference type="KEGG" id="ddi:DDB_G0280643"/>
<dbReference type="dictyBase" id="DDB_G0280643"/>
<dbReference type="VEuPathDB" id="AmoebaDB:DDB_G0280643"/>
<dbReference type="eggNOG" id="KOG0660">
    <property type="taxonomic scope" value="Eukaryota"/>
</dbReference>
<dbReference type="HOGENOM" id="CLU_620278_0_0_1"/>
<dbReference type="InParanoid" id="Q54V35"/>
<dbReference type="PhylomeDB" id="Q54V35"/>
<dbReference type="Reactome" id="R-DDI-168638">
    <property type="pathway name" value="NOD1/2 Signaling Pathway"/>
</dbReference>
<dbReference type="Reactome" id="R-DDI-193648">
    <property type="pathway name" value="NRAGE signals death through JNK"/>
</dbReference>
<dbReference type="Reactome" id="R-DDI-198753">
    <property type="pathway name" value="ERK/MAPK targets"/>
</dbReference>
<dbReference type="Reactome" id="R-DDI-2559580">
    <property type="pathway name" value="Oxidative Stress Induced Senescence"/>
</dbReference>
<dbReference type="Reactome" id="R-DDI-2871796">
    <property type="pathway name" value="FCERI mediated MAPK activation"/>
</dbReference>
<dbReference type="Reactome" id="R-DDI-418592">
    <property type="pathway name" value="ADP signalling through P2Y purinoceptor 1"/>
</dbReference>
<dbReference type="Reactome" id="R-DDI-450321">
    <property type="pathway name" value="JNK (c-Jun kinases) phosphorylation and activation mediated by activated human TAK1"/>
</dbReference>
<dbReference type="Reactome" id="R-DDI-525793">
    <property type="pathway name" value="Myogenesis"/>
</dbReference>
<dbReference type="Reactome" id="R-DDI-6798695">
    <property type="pathway name" value="Neutrophil degranulation"/>
</dbReference>
<dbReference type="Reactome" id="R-DDI-9007892">
    <property type="pathway name" value="Interleukin-38 signaling"/>
</dbReference>
<dbReference type="PRO" id="PR:Q54V35"/>
<dbReference type="Proteomes" id="UP000002195">
    <property type="component" value="Chromosome 3"/>
</dbReference>
<dbReference type="GO" id="GO:0005737">
    <property type="term" value="C:cytoplasm"/>
    <property type="evidence" value="ECO:0000318"/>
    <property type="project" value="GO_Central"/>
</dbReference>
<dbReference type="GO" id="GO:0005634">
    <property type="term" value="C:nucleus"/>
    <property type="evidence" value="ECO:0000318"/>
    <property type="project" value="GO_Central"/>
</dbReference>
<dbReference type="GO" id="GO:0005524">
    <property type="term" value="F:ATP binding"/>
    <property type="evidence" value="ECO:0007669"/>
    <property type="project" value="UniProtKB-KW"/>
</dbReference>
<dbReference type="GO" id="GO:0106310">
    <property type="term" value="F:protein serine kinase activity"/>
    <property type="evidence" value="ECO:0007669"/>
    <property type="project" value="RHEA"/>
</dbReference>
<dbReference type="GO" id="GO:0004674">
    <property type="term" value="F:protein serine/threonine kinase activity"/>
    <property type="evidence" value="ECO:0000318"/>
    <property type="project" value="GO_Central"/>
</dbReference>
<dbReference type="GO" id="GO:0035556">
    <property type="term" value="P:intracellular signal transduction"/>
    <property type="evidence" value="ECO:0000318"/>
    <property type="project" value="GO_Central"/>
</dbReference>
<dbReference type="FunFam" id="1.10.510.10:FF:002189">
    <property type="entry name" value="Probable inactive serine/threonine-protein kinase DDB_G0280855"/>
    <property type="match status" value="1"/>
</dbReference>
<dbReference type="Gene3D" id="3.30.200.20">
    <property type="entry name" value="Phosphorylase Kinase, domain 1"/>
    <property type="match status" value="1"/>
</dbReference>
<dbReference type="Gene3D" id="1.10.510.10">
    <property type="entry name" value="Transferase(Phosphotransferase) domain 1"/>
    <property type="match status" value="1"/>
</dbReference>
<dbReference type="InterPro" id="IPR011009">
    <property type="entry name" value="Kinase-like_dom_sf"/>
</dbReference>
<dbReference type="InterPro" id="IPR050117">
    <property type="entry name" value="MAP_kinase"/>
</dbReference>
<dbReference type="InterPro" id="IPR000719">
    <property type="entry name" value="Prot_kinase_dom"/>
</dbReference>
<dbReference type="PANTHER" id="PTHR24055">
    <property type="entry name" value="MITOGEN-ACTIVATED PROTEIN KINASE"/>
    <property type="match status" value="1"/>
</dbReference>
<dbReference type="Pfam" id="PF00069">
    <property type="entry name" value="Pkinase"/>
    <property type="match status" value="1"/>
</dbReference>
<dbReference type="SMART" id="SM00220">
    <property type="entry name" value="S_TKc"/>
    <property type="match status" value="1"/>
</dbReference>
<dbReference type="SUPFAM" id="SSF56112">
    <property type="entry name" value="Protein kinase-like (PK-like)"/>
    <property type="match status" value="1"/>
</dbReference>
<dbReference type="PROSITE" id="PS50011">
    <property type="entry name" value="PROTEIN_KINASE_DOM"/>
    <property type="match status" value="1"/>
</dbReference>
<proteinExistence type="inferred from homology"/>
<evidence type="ECO:0000255" key="1">
    <source>
        <dbReference type="PROSITE-ProRule" id="PRU00159"/>
    </source>
</evidence>
<evidence type="ECO:0000305" key="2"/>
<accession>Q54V35</accession>
<keyword id="KW-0067">ATP-binding</keyword>
<keyword id="KW-0418">Kinase</keyword>
<keyword id="KW-0547">Nucleotide-binding</keyword>
<keyword id="KW-1185">Reference proteome</keyword>
<keyword id="KW-0723">Serine/threonine-protein kinase</keyword>
<keyword id="KW-0808">Transferase</keyword>
<gene>
    <name type="ORF">DDB_G0280643</name>
</gene>
<organism>
    <name type="scientific">Dictyostelium discoideum</name>
    <name type="common">Social amoeba</name>
    <dbReference type="NCBI Taxonomy" id="44689"/>
    <lineage>
        <taxon>Eukaryota</taxon>
        <taxon>Amoebozoa</taxon>
        <taxon>Evosea</taxon>
        <taxon>Eumycetozoa</taxon>
        <taxon>Dictyostelia</taxon>
        <taxon>Dictyosteliales</taxon>
        <taxon>Dictyosteliaceae</taxon>
        <taxon>Dictyostelium</taxon>
    </lineage>
</organism>
<comment type="catalytic activity">
    <reaction>
        <text>L-seryl-[protein] + ATP = O-phospho-L-seryl-[protein] + ADP + H(+)</text>
        <dbReference type="Rhea" id="RHEA:17989"/>
        <dbReference type="Rhea" id="RHEA-COMP:9863"/>
        <dbReference type="Rhea" id="RHEA-COMP:11604"/>
        <dbReference type="ChEBI" id="CHEBI:15378"/>
        <dbReference type="ChEBI" id="CHEBI:29999"/>
        <dbReference type="ChEBI" id="CHEBI:30616"/>
        <dbReference type="ChEBI" id="CHEBI:83421"/>
        <dbReference type="ChEBI" id="CHEBI:456216"/>
        <dbReference type="EC" id="2.7.11.1"/>
    </reaction>
</comment>
<comment type="catalytic activity">
    <reaction>
        <text>L-threonyl-[protein] + ATP = O-phospho-L-threonyl-[protein] + ADP + H(+)</text>
        <dbReference type="Rhea" id="RHEA:46608"/>
        <dbReference type="Rhea" id="RHEA-COMP:11060"/>
        <dbReference type="Rhea" id="RHEA-COMP:11605"/>
        <dbReference type="ChEBI" id="CHEBI:15378"/>
        <dbReference type="ChEBI" id="CHEBI:30013"/>
        <dbReference type="ChEBI" id="CHEBI:30616"/>
        <dbReference type="ChEBI" id="CHEBI:61977"/>
        <dbReference type="ChEBI" id="CHEBI:456216"/>
        <dbReference type="EC" id="2.7.11.1"/>
    </reaction>
</comment>
<comment type="similarity">
    <text evidence="2">Belongs to the protein kinase superfamily. CMGC Ser/Thr protein kinase family. MAP kinase subfamily.</text>
</comment>
<feature type="chain" id="PRO_0000358904" description="Probable serine/threonine-protein kinase kinase DDB_G0280643">
    <location>
        <begin position="1"/>
        <end position="442"/>
    </location>
</feature>
<feature type="domain" description="Protein kinase" evidence="1">
    <location>
        <begin position="74"/>
        <end position="398"/>
    </location>
</feature>
<feature type="active site" description="Proton acceptor" evidence="1">
    <location>
        <position position="231"/>
    </location>
</feature>
<feature type="binding site" evidence="1">
    <location>
        <begin position="80"/>
        <end position="88"/>
    </location>
    <ligand>
        <name>ATP</name>
        <dbReference type="ChEBI" id="CHEBI:30616"/>
    </ligand>
</feature>
<feature type="binding site" evidence="1">
    <location>
        <position position="103"/>
    </location>
    <ligand>
        <name>ATP</name>
        <dbReference type="ChEBI" id="CHEBI:30616"/>
    </ligand>
</feature>
<protein>
    <recommendedName>
        <fullName>Probable serine/threonine-protein kinase kinase DDB_G0280643</fullName>
        <ecNumber>2.7.11.1</ecNumber>
    </recommendedName>
</protein>
<name>Y9841_DICDI</name>
<reference key="1">
    <citation type="journal article" date="2005" name="Nature">
        <title>The genome of the social amoeba Dictyostelium discoideum.</title>
        <authorList>
            <person name="Eichinger L."/>
            <person name="Pachebat J.A."/>
            <person name="Gloeckner G."/>
            <person name="Rajandream M.A."/>
            <person name="Sucgang R."/>
            <person name="Berriman M."/>
            <person name="Song J."/>
            <person name="Olsen R."/>
            <person name="Szafranski K."/>
            <person name="Xu Q."/>
            <person name="Tunggal B."/>
            <person name="Kummerfeld S."/>
            <person name="Madera M."/>
            <person name="Konfortov B.A."/>
            <person name="Rivero F."/>
            <person name="Bankier A.T."/>
            <person name="Lehmann R."/>
            <person name="Hamlin N."/>
            <person name="Davies R."/>
            <person name="Gaudet P."/>
            <person name="Fey P."/>
            <person name="Pilcher K."/>
            <person name="Chen G."/>
            <person name="Saunders D."/>
            <person name="Sodergren E.J."/>
            <person name="Davis P."/>
            <person name="Kerhornou A."/>
            <person name="Nie X."/>
            <person name="Hall N."/>
            <person name="Anjard C."/>
            <person name="Hemphill L."/>
            <person name="Bason N."/>
            <person name="Farbrother P."/>
            <person name="Desany B."/>
            <person name="Just E."/>
            <person name="Morio T."/>
            <person name="Rost R."/>
            <person name="Churcher C.M."/>
            <person name="Cooper J."/>
            <person name="Haydock S."/>
            <person name="van Driessche N."/>
            <person name="Cronin A."/>
            <person name="Goodhead I."/>
            <person name="Muzny D.M."/>
            <person name="Mourier T."/>
            <person name="Pain A."/>
            <person name="Lu M."/>
            <person name="Harper D."/>
            <person name="Lindsay R."/>
            <person name="Hauser H."/>
            <person name="James K.D."/>
            <person name="Quiles M."/>
            <person name="Madan Babu M."/>
            <person name="Saito T."/>
            <person name="Buchrieser C."/>
            <person name="Wardroper A."/>
            <person name="Felder M."/>
            <person name="Thangavelu M."/>
            <person name="Johnson D."/>
            <person name="Knights A."/>
            <person name="Loulseged H."/>
            <person name="Mungall K.L."/>
            <person name="Oliver K."/>
            <person name="Price C."/>
            <person name="Quail M.A."/>
            <person name="Urushihara H."/>
            <person name="Hernandez J."/>
            <person name="Rabbinowitsch E."/>
            <person name="Steffen D."/>
            <person name="Sanders M."/>
            <person name="Ma J."/>
            <person name="Kohara Y."/>
            <person name="Sharp S."/>
            <person name="Simmonds M.N."/>
            <person name="Spiegler S."/>
            <person name="Tivey A."/>
            <person name="Sugano S."/>
            <person name="White B."/>
            <person name="Walker D."/>
            <person name="Woodward J.R."/>
            <person name="Winckler T."/>
            <person name="Tanaka Y."/>
            <person name="Shaulsky G."/>
            <person name="Schleicher M."/>
            <person name="Weinstock G.M."/>
            <person name="Rosenthal A."/>
            <person name="Cox E.C."/>
            <person name="Chisholm R.L."/>
            <person name="Gibbs R.A."/>
            <person name="Loomis W.F."/>
            <person name="Platzer M."/>
            <person name="Kay R.R."/>
            <person name="Williams J.G."/>
            <person name="Dear P.H."/>
            <person name="Noegel A.A."/>
            <person name="Barrell B.G."/>
            <person name="Kuspa A."/>
        </authorList>
    </citation>
    <scope>NUCLEOTIDE SEQUENCE [LARGE SCALE GENOMIC DNA]</scope>
    <source>
        <strain>AX4</strain>
    </source>
</reference>
<sequence length="442" mass="51413">MDIYYILNHDNSDNNIFDFENNSDTIDIGKNYKKCNGQGQMLPPPTLITPSNQNDTITYYTDGRSISVPRKMLIDPNTIVDCGTNGIMFIAFNFETQKRVILKKLSKRMFDNELNGHRIIRNLIFQNLFQGGKHISTYQSIFKRKCSDSYQPPLTSILNSIISSNDNPQQHSTLIQQKDDEDFYFESIQPQYSLLNLISNNMLDQDDICQLFYEILMGLKFMHSAGVIHRDLDPENSIFVDENFNIKFTEFNNCFLLDTDPTFLFNKEYITNTYSYRAPETIWGDSLYTEATDVWGAGVLFAELLLGKRLFRSFNSKEHLKSIYKLIGAPKASEGAYVVKGELLFFLMEYNRKNSFQPTFNNTFIGCNQIQIDLLKNMLCWDPRDRYSVNEILESPYFENIHDRTNFIPCDKNLNVNIHFDILNLKPNQMTNLIDQEFLNPS</sequence>